<sequence length="177" mass="19319">MPIKSRIRTVPDYPKKGIMFRDITTLIKDPVGFRLVIDNMTQHYLSNGVDFDAIVGIESRGFILGGALAYTLGKGFVPVRKPGKLPADVVQLEYELEYGTDKIEMHTDALVQGQRVLLVDDLLATGGTALAAAGLVEKLGGVVASMAFIVNLPDIGGEKKIREKGYNIYFLTEFEGD</sequence>
<reference key="1">
    <citation type="journal article" date="2002" name="Proc. Natl. Acad. Sci. U.S.A.">
        <title>The complete genome sequence of Chlorobium tepidum TLS, a photosynthetic, anaerobic, green-sulfur bacterium.</title>
        <authorList>
            <person name="Eisen J.A."/>
            <person name="Nelson K.E."/>
            <person name="Paulsen I.T."/>
            <person name="Heidelberg J.F."/>
            <person name="Wu M."/>
            <person name="Dodson R.J."/>
            <person name="DeBoy R.T."/>
            <person name="Gwinn M.L."/>
            <person name="Nelson W.C."/>
            <person name="Haft D.H."/>
            <person name="Hickey E.K."/>
            <person name="Peterson J.D."/>
            <person name="Durkin A.S."/>
            <person name="Kolonay J.F."/>
            <person name="Yang F."/>
            <person name="Holt I.E."/>
            <person name="Umayam L.A."/>
            <person name="Mason T.M."/>
            <person name="Brenner M."/>
            <person name="Shea T.P."/>
            <person name="Parksey D.S."/>
            <person name="Nierman W.C."/>
            <person name="Feldblyum T.V."/>
            <person name="Hansen C.L."/>
            <person name="Craven M.B."/>
            <person name="Radune D."/>
            <person name="Vamathevan J.J."/>
            <person name="Khouri H.M."/>
            <person name="White O."/>
            <person name="Gruber T.M."/>
            <person name="Ketchum K.A."/>
            <person name="Venter J.C."/>
            <person name="Tettelin H."/>
            <person name="Bryant D.A."/>
            <person name="Fraser C.M."/>
        </authorList>
    </citation>
    <scope>NUCLEOTIDE SEQUENCE [LARGE SCALE GENOMIC DNA]</scope>
    <source>
        <strain>ATCC 49652 / DSM 12025 / NBRC 103806 / TLS</strain>
    </source>
</reference>
<gene>
    <name evidence="1" type="primary">apt</name>
    <name type="ordered locus">CT0293</name>
</gene>
<proteinExistence type="inferred from homology"/>
<feature type="chain" id="PRO_0000149371" description="Adenine phosphoribosyltransferase">
    <location>
        <begin position="1"/>
        <end position="177"/>
    </location>
</feature>
<comment type="function">
    <text evidence="1">Catalyzes a salvage reaction resulting in the formation of AMP, that is energically less costly than de novo synthesis.</text>
</comment>
<comment type="catalytic activity">
    <reaction evidence="1">
        <text>AMP + diphosphate = 5-phospho-alpha-D-ribose 1-diphosphate + adenine</text>
        <dbReference type="Rhea" id="RHEA:16609"/>
        <dbReference type="ChEBI" id="CHEBI:16708"/>
        <dbReference type="ChEBI" id="CHEBI:33019"/>
        <dbReference type="ChEBI" id="CHEBI:58017"/>
        <dbReference type="ChEBI" id="CHEBI:456215"/>
        <dbReference type="EC" id="2.4.2.7"/>
    </reaction>
</comment>
<comment type="pathway">
    <text evidence="1">Purine metabolism; AMP biosynthesis via salvage pathway; AMP from adenine: step 1/1.</text>
</comment>
<comment type="subunit">
    <text evidence="1">Homodimer.</text>
</comment>
<comment type="subcellular location">
    <subcellularLocation>
        <location evidence="1">Cytoplasm</location>
    </subcellularLocation>
</comment>
<comment type="similarity">
    <text evidence="1">Belongs to the purine/pyrimidine phosphoribosyltransferase family.</text>
</comment>
<dbReference type="EC" id="2.4.2.7" evidence="1"/>
<dbReference type="EMBL" id="AE006470">
    <property type="protein sequence ID" value="AAM71539.1"/>
    <property type="molecule type" value="Genomic_DNA"/>
</dbReference>
<dbReference type="RefSeq" id="NP_661197.1">
    <property type="nucleotide sequence ID" value="NC_002932.3"/>
</dbReference>
<dbReference type="RefSeq" id="WP_010931985.1">
    <property type="nucleotide sequence ID" value="NC_002932.3"/>
</dbReference>
<dbReference type="SMR" id="Q8KFM9"/>
<dbReference type="STRING" id="194439.CT0293"/>
<dbReference type="EnsemblBacteria" id="AAM71539">
    <property type="protein sequence ID" value="AAM71539"/>
    <property type="gene ID" value="CT0293"/>
</dbReference>
<dbReference type="KEGG" id="cte:CT0293"/>
<dbReference type="PATRIC" id="fig|194439.7.peg.284"/>
<dbReference type="eggNOG" id="COG0503">
    <property type="taxonomic scope" value="Bacteria"/>
</dbReference>
<dbReference type="HOGENOM" id="CLU_063339_3_0_10"/>
<dbReference type="OrthoDB" id="9803963at2"/>
<dbReference type="UniPathway" id="UPA00588">
    <property type="reaction ID" value="UER00646"/>
</dbReference>
<dbReference type="Proteomes" id="UP000001007">
    <property type="component" value="Chromosome"/>
</dbReference>
<dbReference type="GO" id="GO:0005737">
    <property type="term" value="C:cytoplasm"/>
    <property type="evidence" value="ECO:0007669"/>
    <property type="project" value="UniProtKB-SubCell"/>
</dbReference>
<dbReference type="GO" id="GO:0002055">
    <property type="term" value="F:adenine binding"/>
    <property type="evidence" value="ECO:0007669"/>
    <property type="project" value="TreeGrafter"/>
</dbReference>
<dbReference type="GO" id="GO:0003999">
    <property type="term" value="F:adenine phosphoribosyltransferase activity"/>
    <property type="evidence" value="ECO:0007669"/>
    <property type="project" value="UniProtKB-UniRule"/>
</dbReference>
<dbReference type="GO" id="GO:0016208">
    <property type="term" value="F:AMP binding"/>
    <property type="evidence" value="ECO:0007669"/>
    <property type="project" value="TreeGrafter"/>
</dbReference>
<dbReference type="GO" id="GO:0006168">
    <property type="term" value="P:adenine salvage"/>
    <property type="evidence" value="ECO:0007669"/>
    <property type="project" value="InterPro"/>
</dbReference>
<dbReference type="GO" id="GO:0044209">
    <property type="term" value="P:AMP salvage"/>
    <property type="evidence" value="ECO:0007669"/>
    <property type="project" value="UniProtKB-UniRule"/>
</dbReference>
<dbReference type="GO" id="GO:0006166">
    <property type="term" value="P:purine ribonucleoside salvage"/>
    <property type="evidence" value="ECO:0007669"/>
    <property type="project" value="UniProtKB-KW"/>
</dbReference>
<dbReference type="CDD" id="cd06223">
    <property type="entry name" value="PRTases_typeI"/>
    <property type="match status" value="1"/>
</dbReference>
<dbReference type="FunFam" id="3.40.50.2020:FF:000021">
    <property type="entry name" value="Adenine phosphoribosyltransferase"/>
    <property type="match status" value="1"/>
</dbReference>
<dbReference type="Gene3D" id="3.40.50.2020">
    <property type="match status" value="1"/>
</dbReference>
<dbReference type="HAMAP" id="MF_00004">
    <property type="entry name" value="Aden_phosphoribosyltr"/>
    <property type="match status" value="1"/>
</dbReference>
<dbReference type="InterPro" id="IPR005764">
    <property type="entry name" value="Ade_phspho_trans"/>
</dbReference>
<dbReference type="InterPro" id="IPR000836">
    <property type="entry name" value="PRibTrfase_dom"/>
</dbReference>
<dbReference type="InterPro" id="IPR029057">
    <property type="entry name" value="PRTase-like"/>
</dbReference>
<dbReference type="InterPro" id="IPR050054">
    <property type="entry name" value="UPRTase/APRTase"/>
</dbReference>
<dbReference type="NCBIfam" id="TIGR01090">
    <property type="entry name" value="apt"/>
    <property type="match status" value="1"/>
</dbReference>
<dbReference type="NCBIfam" id="NF002634">
    <property type="entry name" value="PRK02304.1-3"/>
    <property type="match status" value="1"/>
</dbReference>
<dbReference type="NCBIfam" id="NF002636">
    <property type="entry name" value="PRK02304.1-5"/>
    <property type="match status" value="1"/>
</dbReference>
<dbReference type="PANTHER" id="PTHR32315">
    <property type="entry name" value="ADENINE PHOSPHORIBOSYLTRANSFERASE"/>
    <property type="match status" value="1"/>
</dbReference>
<dbReference type="PANTHER" id="PTHR32315:SF3">
    <property type="entry name" value="ADENINE PHOSPHORIBOSYLTRANSFERASE"/>
    <property type="match status" value="1"/>
</dbReference>
<dbReference type="Pfam" id="PF00156">
    <property type="entry name" value="Pribosyltran"/>
    <property type="match status" value="1"/>
</dbReference>
<dbReference type="SUPFAM" id="SSF53271">
    <property type="entry name" value="PRTase-like"/>
    <property type="match status" value="1"/>
</dbReference>
<dbReference type="PROSITE" id="PS00103">
    <property type="entry name" value="PUR_PYR_PR_TRANSFER"/>
    <property type="match status" value="1"/>
</dbReference>
<protein>
    <recommendedName>
        <fullName evidence="1">Adenine phosphoribosyltransferase</fullName>
        <shortName evidence="1">APRT</shortName>
        <ecNumber evidence="1">2.4.2.7</ecNumber>
    </recommendedName>
</protein>
<name>APT_CHLTE</name>
<organism>
    <name type="scientific">Chlorobaculum tepidum (strain ATCC 49652 / DSM 12025 / NBRC 103806 / TLS)</name>
    <name type="common">Chlorobium tepidum</name>
    <dbReference type="NCBI Taxonomy" id="194439"/>
    <lineage>
        <taxon>Bacteria</taxon>
        <taxon>Pseudomonadati</taxon>
        <taxon>Chlorobiota</taxon>
        <taxon>Chlorobiia</taxon>
        <taxon>Chlorobiales</taxon>
        <taxon>Chlorobiaceae</taxon>
        <taxon>Chlorobaculum</taxon>
    </lineage>
</organism>
<keyword id="KW-0963">Cytoplasm</keyword>
<keyword id="KW-0328">Glycosyltransferase</keyword>
<keyword id="KW-0660">Purine salvage</keyword>
<keyword id="KW-1185">Reference proteome</keyword>
<keyword id="KW-0808">Transferase</keyword>
<evidence type="ECO:0000255" key="1">
    <source>
        <dbReference type="HAMAP-Rule" id="MF_00004"/>
    </source>
</evidence>
<accession>Q8KFM9</accession>